<comment type="catalytic activity">
    <reaction evidence="1">
        <text>tRNA(Phe) + L-phenylalanine + ATP = L-phenylalanyl-tRNA(Phe) + AMP + diphosphate + H(+)</text>
        <dbReference type="Rhea" id="RHEA:19413"/>
        <dbReference type="Rhea" id="RHEA-COMP:9668"/>
        <dbReference type="Rhea" id="RHEA-COMP:9699"/>
        <dbReference type="ChEBI" id="CHEBI:15378"/>
        <dbReference type="ChEBI" id="CHEBI:30616"/>
        <dbReference type="ChEBI" id="CHEBI:33019"/>
        <dbReference type="ChEBI" id="CHEBI:58095"/>
        <dbReference type="ChEBI" id="CHEBI:78442"/>
        <dbReference type="ChEBI" id="CHEBI:78531"/>
        <dbReference type="ChEBI" id="CHEBI:456215"/>
        <dbReference type="EC" id="6.1.1.20"/>
    </reaction>
</comment>
<comment type="cofactor">
    <cofactor evidence="1">
        <name>Mg(2+)</name>
        <dbReference type="ChEBI" id="CHEBI:18420"/>
    </cofactor>
    <text evidence="1">Binds 2 magnesium ions per tetramer.</text>
</comment>
<comment type="subunit">
    <text evidence="1">Tetramer of two alpha and two beta subunits.</text>
</comment>
<comment type="subcellular location">
    <subcellularLocation>
        <location evidence="1">Cytoplasm</location>
    </subcellularLocation>
</comment>
<comment type="similarity">
    <text evidence="1">Belongs to the class-II aminoacyl-tRNA synthetase family. Phe-tRNA synthetase alpha subunit type 1 subfamily.</text>
</comment>
<reference key="1">
    <citation type="journal article" date="2003" name="Proc. Natl. Acad. Sci. U.S.A.">
        <title>The complete genome sequence of Chromobacterium violaceum reveals remarkable and exploitable bacterial adaptability.</title>
        <authorList>
            <person name="Vasconcelos A.T.R."/>
            <person name="de Almeida D.F."/>
            <person name="Hungria M."/>
            <person name="Guimaraes C.T."/>
            <person name="Antonio R.V."/>
            <person name="Almeida F.C."/>
            <person name="de Almeida L.G.P."/>
            <person name="de Almeida R."/>
            <person name="Alves-Gomes J.A."/>
            <person name="Andrade E.M."/>
            <person name="Araripe J."/>
            <person name="de Araujo M.F.F."/>
            <person name="Astolfi-Filho S."/>
            <person name="Azevedo V."/>
            <person name="Baptista A.J."/>
            <person name="Bataus L.A.M."/>
            <person name="Batista J.S."/>
            <person name="Belo A."/>
            <person name="van den Berg C."/>
            <person name="Bogo M."/>
            <person name="Bonatto S."/>
            <person name="Bordignon J."/>
            <person name="Brigido M.M."/>
            <person name="Brito C.A."/>
            <person name="Brocchi M."/>
            <person name="Burity H.A."/>
            <person name="Camargo A.A."/>
            <person name="Cardoso D.D.P."/>
            <person name="Carneiro N.P."/>
            <person name="Carraro D.M."/>
            <person name="Carvalho C.M.B."/>
            <person name="Cascardo J.C.M."/>
            <person name="Cavada B.S."/>
            <person name="Chueire L.M.O."/>
            <person name="Creczynski-Pasa T.B."/>
            <person name="Cunha-Junior N.C."/>
            <person name="Fagundes N."/>
            <person name="Falcao C.L."/>
            <person name="Fantinatti F."/>
            <person name="Farias I.P."/>
            <person name="Felipe M.S.S."/>
            <person name="Ferrari L.P."/>
            <person name="Ferro J.A."/>
            <person name="Ferro M.I.T."/>
            <person name="Franco G.R."/>
            <person name="Freitas N.S.A."/>
            <person name="Furlan L.R."/>
            <person name="Gazzinelli R.T."/>
            <person name="Gomes E.A."/>
            <person name="Goncalves P.R."/>
            <person name="Grangeiro T.B."/>
            <person name="Grattapaglia D."/>
            <person name="Grisard E.C."/>
            <person name="Hanna E.S."/>
            <person name="Jardim S.N."/>
            <person name="Laurino J."/>
            <person name="Leoi L.C.T."/>
            <person name="Lima L.F.A."/>
            <person name="Loureiro M.F."/>
            <person name="Lyra M.C.C.P."/>
            <person name="Madeira H.M.F."/>
            <person name="Manfio G.P."/>
            <person name="Maranhao A.Q."/>
            <person name="Martins W.S."/>
            <person name="di Mauro S.M.Z."/>
            <person name="de Medeiros S.R.B."/>
            <person name="Meissner R.V."/>
            <person name="Moreira M.A.M."/>
            <person name="Nascimento F.F."/>
            <person name="Nicolas M.F."/>
            <person name="Oliveira J.G."/>
            <person name="Oliveira S.C."/>
            <person name="Paixao R.F.C."/>
            <person name="Parente J.A."/>
            <person name="Pedrosa F.O."/>
            <person name="Pena S.D.J."/>
            <person name="Pereira J.O."/>
            <person name="Pereira M."/>
            <person name="Pinto L.S.R.C."/>
            <person name="Pinto L.S."/>
            <person name="Porto J.I.R."/>
            <person name="Potrich D.P."/>
            <person name="Ramalho-Neto C.E."/>
            <person name="Reis A.M.M."/>
            <person name="Rigo L.U."/>
            <person name="Rondinelli E."/>
            <person name="Santos E.B.P."/>
            <person name="Santos F.R."/>
            <person name="Schneider M.P.C."/>
            <person name="Seuanez H.N."/>
            <person name="Silva A.M.R."/>
            <person name="da Silva A.L.C."/>
            <person name="Silva D.W."/>
            <person name="Silva R."/>
            <person name="Simoes I.C."/>
            <person name="Simon D."/>
            <person name="Soares C.M.A."/>
            <person name="Soares R.B.A."/>
            <person name="Souza E.M."/>
            <person name="Souza K.R.L."/>
            <person name="Souza R.C."/>
            <person name="Steffens M.B.R."/>
            <person name="Steindel M."/>
            <person name="Teixeira S.R."/>
            <person name="Urmenyi T."/>
            <person name="Vettore A."/>
            <person name="Wassem R."/>
            <person name="Zaha A."/>
            <person name="Simpson A.J.G."/>
        </authorList>
    </citation>
    <scope>NUCLEOTIDE SEQUENCE [LARGE SCALE GENOMIC DNA]</scope>
    <source>
        <strain>ATCC 12472 / DSM 30191 / JCM 1249 / CCUG 213 / NBRC 12614 / NCIMB 9131 / NCTC 9757 / MK</strain>
    </source>
</reference>
<gene>
    <name evidence="1" type="primary">pheS</name>
    <name type="ordered locus">CV_1352</name>
</gene>
<dbReference type="EC" id="6.1.1.20" evidence="1"/>
<dbReference type="EMBL" id="AE016825">
    <property type="protein sequence ID" value="AAQ59027.2"/>
    <property type="molecule type" value="Genomic_DNA"/>
</dbReference>
<dbReference type="RefSeq" id="WP_011134906.1">
    <property type="nucleotide sequence ID" value="NC_005085.1"/>
</dbReference>
<dbReference type="SMR" id="Q7NYC2"/>
<dbReference type="STRING" id="243365.CV_1352"/>
<dbReference type="KEGG" id="cvi:CV_1352"/>
<dbReference type="eggNOG" id="COG0016">
    <property type="taxonomic scope" value="Bacteria"/>
</dbReference>
<dbReference type="HOGENOM" id="CLU_025086_0_1_4"/>
<dbReference type="OrthoDB" id="9800719at2"/>
<dbReference type="Proteomes" id="UP000001424">
    <property type="component" value="Chromosome"/>
</dbReference>
<dbReference type="GO" id="GO:0005737">
    <property type="term" value="C:cytoplasm"/>
    <property type="evidence" value="ECO:0007669"/>
    <property type="project" value="UniProtKB-SubCell"/>
</dbReference>
<dbReference type="GO" id="GO:0005524">
    <property type="term" value="F:ATP binding"/>
    <property type="evidence" value="ECO:0007669"/>
    <property type="project" value="UniProtKB-UniRule"/>
</dbReference>
<dbReference type="GO" id="GO:0000287">
    <property type="term" value="F:magnesium ion binding"/>
    <property type="evidence" value="ECO:0007669"/>
    <property type="project" value="UniProtKB-UniRule"/>
</dbReference>
<dbReference type="GO" id="GO:0004826">
    <property type="term" value="F:phenylalanine-tRNA ligase activity"/>
    <property type="evidence" value="ECO:0007669"/>
    <property type="project" value="UniProtKB-UniRule"/>
</dbReference>
<dbReference type="GO" id="GO:0000049">
    <property type="term" value="F:tRNA binding"/>
    <property type="evidence" value="ECO:0007669"/>
    <property type="project" value="InterPro"/>
</dbReference>
<dbReference type="GO" id="GO:0006432">
    <property type="term" value="P:phenylalanyl-tRNA aminoacylation"/>
    <property type="evidence" value="ECO:0007669"/>
    <property type="project" value="UniProtKB-UniRule"/>
</dbReference>
<dbReference type="CDD" id="cd00496">
    <property type="entry name" value="PheRS_alpha_core"/>
    <property type="match status" value="1"/>
</dbReference>
<dbReference type="FunFam" id="3.30.930.10:FF:000003">
    <property type="entry name" value="Phenylalanine--tRNA ligase alpha subunit"/>
    <property type="match status" value="1"/>
</dbReference>
<dbReference type="Gene3D" id="3.30.930.10">
    <property type="entry name" value="Bira Bifunctional Protein, Domain 2"/>
    <property type="match status" value="1"/>
</dbReference>
<dbReference type="HAMAP" id="MF_00281">
    <property type="entry name" value="Phe_tRNA_synth_alpha1"/>
    <property type="match status" value="1"/>
</dbReference>
<dbReference type="InterPro" id="IPR006195">
    <property type="entry name" value="aa-tRNA-synth_II"/>
</dbReference>
<dbReference type="InterPro" id="IPR045864">
    <property type="entry name" value="aa-tRNA-synth_II/BPL/LPL"/>
</dbReference>
<dbReference type="InterPro" id="IPR004529">
    <property type="entry name" value="Phe-tRNA-synth_IIc_asu"/>
</dbReference>
<dbReference type="InterPro" id="IPR004188">
    <property type="entry name" value="Phe-tRNA_ligase_II_N"/>
</dbReference>
<dbReference type="InterPro" id="IPR022911">
    <property type="entry name" value="Phe_tRNA_ligase_alpha1_bac"/>
</dbReference>
<dbReference type="InterPro" id="IPR002319">
    <property type="entry name" value="Phenylalanyl-tRNA_Synthase"/>
</dbReference>
<dbReference type="InterPro" id="IPR010978">
    <property type="entry name" value="tRNA-bd_arm"/>
</dbReference>
<dbReference type="NCBIfam" id="TIGR00468">
    <property type="entry name" value="pheS"/>
    <property type="match status" value="1"/>
</dbReference>
<dbReference type="PANTHER" id="PTHR11538:SF41">
    <property type="entry name" value="PHENYLALANINE--TRNA LIGASE, MITOCHONDRIAL"/>
    <property type="match status" value="1"/>
</dbReference>
<dbReference type="PANTHER" id="PTHR11538">
    <property type="entry name" value="PHENYLALANYL-TRNA SYNTHETASE"/>
    <property type="match status" value="1"/>
</dbReference>
<dbReference type="Pfam" id="PF02912">
    <property type="entry name" value="Phe_tRNA-synt_N"/>
    <property type="match status" value="1"/>
</dbReference>
<dbReference type="Pfam" id="PF01409">
    <property type="entry name" value="tRNA-synt_2d"/>
    <property type="match status" value="1"/>
</dbReference>
<dbReference type="SUPFAM" id="SSF55681">
    <property type="entry name" value="Class II aaRS and biotin synthetases"/>
    <property type="match status" value="1"/>
</dbReference>
<dbReference type="SUPFAM" id="SSF46589">
    <property type="entry name" value="tRNA-binding arm"/>
    <property type="match status" value="1"/>
</dbReference>
<dbReference type="PROSITE" id="PS50862">
    <property type="entry name" value="AA_TRNA_LIGASE_II"/>
    <property type="match status" value="1"/>
</dbReference>
<evidence type="ECO:0000255" key="1">
    <source>
        <dbReference type="HAMAP-Rule" id="MF_00281"/>
    </source>
</evidence>
<feature type="chain" id="PRO_0000126690" description="Phenylalanine--tRNA ligase alpha subunit">
    <location>
        <begin position="1"/>
        <end position="328"/>
    </location>
</feature>
<feature type="binding site" evidence="1">
    <location>
        <position position="253"/>
    </location>
    <ligand>
        <name>Mg(2+)</name>
        <dbReference type="ChEBI" id="CHEBI:18420"/>
        <note>shared with beta subunit</note>
    </ligand>
</feature>
<organism>
    <name type="scientific">Chromobacterium violaceum (strain ATCC 12472 / DSM 30191 / JCM 1249 / CCUG 213 / NBRC 12614 / NCIMB 9131 / NCTC 9757 / MK)</name>
    <dbReference type="NCBI Taxonomy" id="243365"/>
    <lineage>
        <taxon>Bacteria</taxon>
        <taxon>Pseudomonadati</taxon>
        <taxon>Pseudomonadota</taxon>
        <taxon>Betaproteobacteria</taxon>
        <taxon>Neisseriales</taxon>
        <taxon>Chromobacteriaceae</taxon>
        <taxon>Chromobacterium</taxon>
    </lineage>
</organism>
<name>SYFA_CHRVO</name>
<keyword id="KW-0030">Aminoacyl-tRNA synthetase</keyword>
<keyword id="KW-0067">ATP-binding</keyword>
<keyword id="KW-0963">Cytoplasm</keyword>
<keyword id="KW-0436">Ligase</keyword>
<keyword id="KW-0460">Magnesium</keyword>
<keyword id="KW-0479">Metal-binding</keyword>
<keyword id="KW-0547">Nucleotide-binding</keyword>
<keyword id="KW-0648">Protein biosynthesis</keyword>
<keyword id="KW-1185">Reference proteome</keyword>
<accession>Q7NYC2</accession>
<protein>
    <recommendedName>
        <fullName evidence="1">Phenylalanine--tRNA ligase alpha subunit</fullName>
        <ecNumber evidence="1">6.1.1.20</ecNumber>
    </recommendedName>
    <alternativeName>
        <fullName evidence="1">Phenylalanyl-tRNA synthetase alpha subunit</fullName>
        <shortName evidence="1">PheRS</shortName>
    </alternativeName>
</protein>
<proteinExistence type="inferred from homology"/>
<sequence length="328" mass="36460">MNNVDAILQAGQAAVAAAADLIELEQVKARFLGKSGELTELLKQLGKLAPEERKAAGATINQAKQAFEAAHNDKRDQLNAAKLEAQLAAEALDVTLPGRGSVGGGLHPVALTLERIAGLFRTMGFEVADGPEIESDFYNFQALNIPENHPARAMQDTFYVENCDVLRTHTSPIQARFMESHQPPIKIVAPGRVYRVDSDATHSPMFHQMEGLWVEEGVSFADLKAVVTDFLRRFFERDDLQVRFRPSFFPFTETSAEIDVLDEQGKWLEVGGCGMVHPKVLSIANIDPEKYTGFAFGIGLDRFAMLRYGVNDLRLFFENDLNFLKQFN</sequence>